<keyword id="KW-0025">Alternative splicing</keyword>
<keyword id="KW-0175">Coiled coil</keyword>
<keyword id="KW-0963">Cytoplasm</keyword>
<keyword id="KW-0206">Cytoskeleton</keyword>
<keyword id="KW-0225">Disease variant</keyword>
<keyword id="KW-0333">Golgi apparatus</keyword>
<keyword id="KW-0991">Intellectual disability</keyword>
<keyword id="KW-0451">Lissencephaly</keyword>
<keyword id="KW-0493">Microtubule</keyword>
<keyword id="KW-0597">Phosphoprotein</keyword>
<keyword id="KW-1267">Proteomics identification</keyword>
<keyword id="KW-1185">Reference proteome</keyword>
<keyword id="KW-0677">Repeat</keyword>
<keyword id="KW-0879">Wnt signaling pathway</keyword>
<feature type="chain" id="PRO_0000313686" description="Adenomatous polyposis coli protein 2">
    <location>
        <begin position="1"/>
        <end position="2303"/>
    </location>
</feature>
<feature type="repeat" description="ARM 1">
    <location>
        <begin position="302"/>
        <end position="341"/>
    </location>
</feature>
<feature type="repeat" description="ARM 2">
    <location>
        <begin position="479"/>
        <end position="518"/>
    </location>
</feature>
<feature type="repeat" description="ARM 3">
    <location>
        <begin position="522"/>
        <end position="562"/>
    </location>
</feature>
<feature type="repeat" description="ARM 4">
    <location>
        <begin position="566"/>
        <end position="609"/>
    </location>
</feature>
<feature type="repeat" description="ARM 5">
    <location>
        <begin position="615"/>
        <end position="654"/>
    </location>
</feature>
<feature type="repeat" description="ARM 6">
    <location>
        <begin position="657"/>
        <end position="696"/>
    </location>
</feature>
<feature type="repeat" description="1">
    <location>
        <begin position="1058"/>
        <end position="1077"/>
    </location>
</feature>
<feature type="repeat" description="2">
    <location>
        <begin position="1150"/>
        <end position="1169"/>
    </location>
</feature>
<feature type="repeat" description="3">
    <location>
        <begin position="1263"/>
        <end position="1282"/>
    </location>
</feature>
<feature type="repeat" description="4">
    <location>
        <begin position="1391"/>
        <end position="1410"/>
    </location>
</feature>
<feature type="repeat" description="5">
    <location>
        <begin position="1568"/>
        <end position="1587"/>
    </location>
</feature>
<feature type="region of interest" description="Disordered" evidence="3">
    <location>
        <begin position="94"/>
        <end position="120"/>
    </location>
</feature>
<feature type="region of interest" description="Disordered" evidence="3">
    <location>
        <begin position="247"/>
        <end position="270"/>
    </location>
</feature>
<feature type="region of interest" description="Disordered" evidence="3">
    <location>
        <begin position="744"/>
        <end position="764"/>
    </location>
</feature>
<feature type="region of interest" description="Disordered" evidence="3">
    <location>
        <begin position="816"/>
        <end position="835"/>
    </location>
</feature>
<feature type="region of interest" description="Disordered" evidence="3">
    <location>
        <begin position="867"/>
        <end position="908"/>
    </location>
</feature>
<feature type="region of interest" description="Disordered" evidence="3">
    <location>
        <begin position="953"/>
        <end position="986"/>
    </location>
</feature>
<feature type="region of interest" description="5 X 20 AA approximate repeat of F-X-V-E-X-T-P-X-C-F-S-R-X-S-S-L-S-S-L-S">
    <location>
        <begin position="1058"/>
        <end position="1587"/>
    </location>
</feature>
<feature type="region of interest" description="Interaction with CTNNB1" evidence="12">
    <location>
        <begin position="1058"/>
        <end position="1587"/>
    </location>
</feature>
<feature type="region of interest" description="Disordered" evidence="3">
    <location>
        <begin position="1069"/>
        <end position="1152"/>
    </location>
</feature>
<feature type="region of interest" description="Disordered" evidence="3">
    <location>
        <begin position="1173"/>
        <end position="1228"/>
    </location>
</feature>
<feature type="region of interest" description="Disordered" evidence="3">
    <location>
        <begin position="1307"/>
        <end position="1335"/>
    </location>
</feature>
<feature type="region of interest" description="Disordered" evidence="3">
    <location>
        <begin position="1382"/>
        <end position="1497"/>
    </location>
</feature>
<feature type="region of interest" description="Disordered" evidence="3">
    <location>
        <begin position="1510"/>
        <end position="1684"/>
    </location>
</feature>
<feature type="region of interest" description="Disordered" evidence="3">
    <location>
        <begin position="1724"/>
        <end position="2031"/>
    </location>
</feature>
<feature type="region of interest" description="Required for localization to microtubules and function in microtubule stabilization" evidence="9">
    <location>
        <begin position="1821"/>
        <end position="1900"/>
    </location>
</feature>
<feature type="region of interest" description="Disordered" evidence="3">
    <location>
        <begin position="2046"/>
        <end position="2232"/>
    </location>
</feature>
<feature type="region of interest" description="Interaction with MAPRE1 and MAPRE3" evidence="5">
    <location>
        <begin position="2067"/>
        <end position="2144"/>
    </location>
</feature>
<feature type="coiled-coil region" evidence="2">
    <location>
        <begin position="8"/>
        <end position="59"/>
    </location>
</feature>
<feature type="coiled-coil region" evidence="2">
    <location>
        <begin position="840"/>
        <end position="864"/>
    </location>
</feature>
<feature type="compositionally biased region" description="Basic and acidic residues" evidence="3">
    <location>
        <begin position="825"/>
        <end position="834"/>
    </location>
</feature>
<feature type="compositionally biased region" description="Low complexity" evidence="3">
    <location>
        <begin position="869"/>
        <end position="878"/>
    </location>
</feature>
<feature type="compositionally biased region" description="Low complexity" evidence="3">
    <location>
        <begin position="1069"/>
        <end position="1084"/>
    </location>
</feature>
<feature type="compositionally biased region" description="Acidic residues" evidence="3">
    <location>
        <begin position="1088"/>
        <end position="1101"/>
    </location>
</feature>
<feature type="compositionally biased region" description="Polar residues" evidence="3">
    <location>
        <begin position="1143"/>
        <end position="1152"/>
    </location>
</feature>
<feature type="compositionally biased region" description="Low complexity" evidence="3">
    <location>
        <begin position="1173"/>
        <end position="1186"/>
    </location>
</feature>
<feature type="compositionally biased region" description="Polar residues" evidence="3">
    <location>
        <begin position="1202"/>
        <end position="1212"/>
    </location>
</feature>
<feature type="compositionally biased region" description="Polar residues" evidence="3">
    <location>
        <begin position="1390"/>
        <end position="1410"/>
    </location>
</feature>
<feature type="compositionally biased region" description="Basic and acidic residues" evidence="3">
    <location>
        <begin position="1477"/>
        <end position="1489"/>
    </location>
</feature>
<feature type="compositionally biased region" description="Basic and acidic residues" evidence="3">
    <location>
        <begin position="1537"/>
        <end position="1548"/>
    </location>
</feature>
<feature type="compositionally biased region" description="Low complexity" evidence="3">
    <location>
        <begin position="1578"/>
        <end position="1589"/>
    </location>
</feature>
<feature type="compositionally biased region" description="Basic residues" evidence="3">
    <location>
        <begin position="1638"/>
        <end position="1654"/>
    </location>
</feature>
<feature type="compositionally biased region" description="Basic and acidic residues" evidence="3">
    <location>
        <begin position="1655"/>
        <end position="1671"/>
    </location>
</feature>
<feature type="compositionally biased region" description="Basic and acidic residues" evidence="3">
    <location>
        <begin position="1739"/>
        <end position="1755"/>
    </location>
</feature>
<feature type="compositionally biased region" description="Low complexity" evidence="3">
    <location>
        <begin position="1819"/>
        <end position="1830"/>
    </location>
</feature>
<feature type="compositionally biased region" description="Polar residues" evidence="3">
    <location>
        <begin position="1851"/>
        <end position="1860"/>
    </location>
</feature>
<feature type="compositionally biased region" description="Low complexity" evidence="3">
    <location>
        <begin position="1868"/>
        <end position="1886"/>
    </location>
</feature>
<feature type="compositionally biased region" description="Low complexity" evidence="3">
    <location>
        <begin position="1971"/>
        <end position="1984"/>
    </location>
</feature>
<feature type="compositionally biased region" description="Low complexity" evidence="3">
    <location>
        <begin position="2011"/>
        <end position="2026"/>
    </location>
</feature>
<feature type="compositionally biased region" description="Low complexity" evidence="3">
    <location>
        <begin position="2049"/>
        <end position="2062"/>
    </location>
</feature>
<feature type="compositionally biased region" description="Low complexity" evidence="3">
    <location>
        <begin position="2113"/>
        <end position="2123"/>
    </location>
</feature>
<feature type="compositionally biased region" description="Basic and acidic residues" evidence="3">
    <location>
        <begin position="2124"/>
        <end position="2135"/>
    </location>
</feature>
<feature type="compositionally biased region" description="Polar residues" evidence="3">
    <location>
        <begin position="2200"/>
        <end position="2209"/>
    </location>
</feature>
<feature type="modified residue" description="Phosphoserine" evidence="1">
    <location>
        <position position="1585"/>
    </location>
</feature>
<feature type="modified residue" description="Phosphoserine" evidence="1">
    <location>
        <position position="1587"/>
    </location>
</feature>
<feature type="splice variant" id="VSP_030106" description="In isoform 2." evidence="14">
    <location>
        <begin position="168"/>
        <end position="441"/>
    </location>
</feature>
<feature type="splice variant" id="VSP_030107" description="In isoform 3." evidence="13">
    <location>
        <position position="175"/>
    </location>
</feature>
<feature type="sequence variant" id="VAR_083414" description="In CDCBM10." evidence="11">
    <location>
        <begin position="246"/>
        <end position="2303"/>
    </location>
</feature>
<feature type="sequence variant" id="VAR_083415" description="In CDCBM10." evidence="11">
    <location>
        <begin position="361"/>
        <end position="2303"/>
    </location>
</feature>
<feature type="sequence variant" id="VAR_037703" description="In a breast cancer sample; somatic mutation." evidence="8">
    <original>A</original>
    <variation>S</variation>
    <location>
        <position position="562"/>
    </location>
</feature>
<feature type="sequence variant" id="VAR_083416" description="In CDCBM10." evidence="11">
    <location>
        <begin position="628"/>
        <end position="2303"/>
    </location>
</feature>
<feature type="sequence variant" id="VAR_081224" evidence="10">
    <original>H</original>
    <variation>N</variation>
    <location>
        <position position="1921"/>
    </location>
</feature>
<feature type="sequence variant" id="VAR_037704" description="In a breast cancer sample; somatic mutation; dbSNP:rs1288757495." evidence="8">
    <original>G</original>
    <variation>S</variation>
    <location>
        <position position="2003"/>
    </location>
</feature>
<feature type="sequence variant" id="VAR_037705" description="In dbSNP:rs265277.">
    <original>S</original>
    <variation>A</variation>
    <location>
        <position position="2241"/>
    </location>
</feature>
<feature type="sequence conflict" description="In Ref. 4; AAD28183." evidence="15" ref="4">
    <location>
        <position position="463"/>
    </location>
</feature>
<feature type="sequence conflict" description="In Ref. 4; AAD28183/AAD29274." evidence="15" ref="4">
    <original>KV</original>
    <variation>NL</variation>
    <location>
        <begin position="526"/>
        <end position="527"/>
    </location>
</feature>
<feature type="sequence conflict" description="In Ref. 5; AAF01784/CAB61207." evidence="15" ref="5">
    <original>E</original>
    <variation>A</variation>
    <location>
        <position position="566"/>
    </location>
</feature>
<feature type="sequence conflict" description="In Ref. 4; AAD28183." evidence="15" ref="4">
    <original>L</original>
    <variation>Q</variation>
    <location>
        <position position="816"/>
    </location>
</feature>
<feature type="sequence conflict" description="In Ref. 4; AAD28183." evidence="15" ref="4">
    <original>L</original>
    <variation>P</variation>
    <location>
        <position position="971"/>
    </location>
</feature>
<feature type="sequence conflict" description="In Ref. 4; AAD28183." evidence="15" ref="4">
    <original>S</original>
    <variation>I</variation>
    <location>
        <position position="1106"/>
    </location>
</feature>
<feature type="sequence conflict" description="In Ref. 5; CAA10317." evidence="15" ref="5">
    <original>E</original>
    <variation>G</variation>
    <location>
        <position position="1140"/>
    </location>
</feature>
<feature type="sequence conflict" description="In Ref. 4; AAD28183." evidence="15" ref="4">
    <original>Q</original>
    <variation>H</variation>
    <location>
        <position position="1188"/>
    </location>
</feature>
<feature type="sequence conflict" description="In Ref. 4; AAD28183." evidence="15" ref="4">
    <original>A</original>
    <variation>G</variation>
    <location>
        <position position="1361"/>
    </location>
</feature>
<feature type="sequence conflict" description="In Ref. 4; AAD28183." evidence="15" ref="4">
    <original>R</original>
    <variation>P</variation>
    <location>
        <position position="1456"/>
    </location>
</feature>
<feature type="sequence conflict" description="In Ref. 4; AAD28183." evidence="15" ref="4">
    <original>D</original>
    <variation>V</variation>
    <location>
        <position position="1515"/>
    </location>
</feature>
<feature type="sequence conflict" description="In Ref. 5; CAA10317." evidence="15" ref="5">
    <original>A</original>
    <variation>V</variation>
    <location>
        <position position="2219"/>
    </location>
</feature>
<evidence type="ECO:0000250" key="1">
    <source>
        <dbReference type="UniProtKB" id="Q9Z1K7"/>
    </source>
</evidence>
<evidence type="ECO:0000255" key="2"/>
<evidence type="ECO:0000256" key="3">
    <source>
        <dbReference type="SAM" id="MobiDB-lite"/>
    </source>
</evidence>
<evidence type="ECO:0000269" key="4">
    <source>
    </source>
</evidence>
<evidence type="ECO:0000269" key="5">
    <source>
    </source>
</evidence>
<evidence type="ECO:0000269" key="6">
    <source>
    </source>
</evidence>
<evidence type="ECO:0000269" key="7">
    <source>
    </source>
</evidence>
<evidence type="ECO:0000269" key="8">
    <source>
    </source>
</evidence>
<evidence type="ECO:0000269" key="9">
    <source>
    </source>
</evidence>
<evidence type="ECO:0000269" key="10">
    <source>
    </source>
</evidence>
<evidence type="ECO:0000269" key="11">
    <source>
    </source>
</evidence>
<evidence type="ECO:0000269" key="12">
    <source>
    </source>
</evidence>
<evidence type="ECO:0000303" key="13">
    <source>
    </source>
</evidence>
<evidence type="ECO:0000303" key="14">
    <source ref="4"/>
</evidence>
<evidence type="ECO:0000305" key="15"/>
<evidence type="ECO:0000312" key="16">
    <source>
        <dbReference type="HGNC" id="HGNC:24036"/>
    </source>
</evidence>
<proteinExistence type="evidence at protein level"/>
<dbReference type="EMBL" id="AB012162">
    <property type="protein sequence ID" value="BAA34611.1"/>
    <property type="molecule type" value="mRNA"/>
</dbReference>
<dbReference type="EMBL" id="AB022529">
    <property type="protein sequence ID" value="BAA75469.1"/>
    <property type="molecule type" value="Genomic_DNA"/>
</dbReference>
<dbReference type="EMBL" id="CH471139">
    <property type="protein sequence ID" value="EAW69498.1"/>
    <property type="molecule type" value="Genomic_DNA"/>
</dbReference>
<dbReference type="EMBL" id="AF110334">
    <property type="protein sequence ID" value="AAD28183.1"/>
    <property type="status" value="ALT_FRAME"/>
    <property type="molecule type" value="mRNA"/>
</dbReference>
<dbReference type="EMBL" id="AF110335">
    <property type="protein sequence ID" value="AAD29273.1"/>
    <property type="molecule type" value="Genomic_DNA"/>
</dbReference>
<dbReference type="EMBL" id="AF110337">
    <property type="protein sequence ID" value="AAD29274.1"/>
    <property type="molecule type" value="Genomic_DNA"/>
</dbReference>
<dbReference type="EMBL" id="AF110336">
    <property type="protein sequence ID" value="AAD29274.1"/>
    <property type="status" value="JOINED"/>
    <property type="molecule type" value="Genomic_DNA"/>
</dbReference>
<dbReference type="EMBL" id="AF128222">
    <property type="protein sequence ID" value="AAF01784.1"/>
    <property type="status" value="ALT_SEQ"/>
    <property type="molecule type" value="mRNA"/>
</dbReference>
<dbReference type="EMBL" id="AJ012652">
    <property type="protein sequence ID" value="CAB61207.1"/>
    <property type="status" value="ALT_SEQ"/>
    <property type="molecule type" value="mRNA"/>
</dbReference>
<dbReference type="EMBL" id="AJ131187">
    <property type="protein sequence ID" value="CAA10317.1"/>
    <property type="status" value="ALT_INIT"/>
    <property type="molecule type" value="Genomic_DNA"/>
</dbReference>
<dbReference type="EMBL" id="BC032573">
    <property type="protein sequence ID" value="AAH32573.1"/>
    <property type="molecule type" value="mRNA"/>
</dbReference>
<dbReference type="CCDS" id="CCDS12068.1">
    <molecule id="O95996-1"/>
</dbReference>
<dbReference type="RefSeq" id="NP_001338202.1">
    <molecule id="O95996-3"/>
    <property type="nucleotide sequence ID" value="NM_001351273.1"/>
</dbReference>
<dbReference type="RefSeq" id="NP_005874.1">
    <molecule id="O95996-1"/>
    <property type="nucleotide sequence ID" value="NM_005883.3"/>
</dbReference>
<dbReference type="RefSeq" id="XP_006722671.3">
    <molecule id="O95996-1"/>
    <property type="nucleotide sequence ID" value="XM_006722608.4"/>
</dbReference>
<dbReference type="RefSeq" id="XP_006722672.1">
    <molecule id="O95996-1"/>
    <property type="nucleotide sequence ID" value="XM_006722609.4"/>
</dbReference>
<dbReference type="RefSeq" id="XP_006722673.3">
    <molecule id="O95996-3"/>
    <property type="nucleotide sequence ID" value="XM_006722610.4"/>
</dbReference>
<dbReference type="RefSeq" id="XP_047293987.1">
    <molecule id="O95996-3"/>
    <property type="nucleotide sequence ID" value="XM_047438031.1"/>
</dbReference>
<dbReference type="RefSeq" id="XP_047293988.1">
    <molecule id="O95996-3"/>
    <property type="nucleotide sequence ID" value="XM_047438032.1"/>
</dbReference>
<dbReference type="RefSeq" id="XP_054175475.1">
    <molecule id="O95996-1"/>
    <property type="nucleotide sequence ID" value="XM_054319500.1"/>
</dbReference>
<dbReference type="RefSeq" id="XP_054175476.1">
    <molecule id="O95996-3"/>
    <property type="nucleotide sequence ID" value="XM_054319501.1"/>
</dbReference>
<dbReference type="RefSeq" id="XP_054175477.1">
    <molecule id="O95996-3"/>
    <property type="nucleotide sequence ID" value="XM_054319502.1"/>
</dbReference>
<dbReference type="SMR" id="O95996"/>
<dbReference type="BioGRID" id="115585">
    <property type="interactions" value="16"/>
</dbReference>
<dbReference type="ComplexPortal" id="CPX-440">
    <property type="entry name" value="Beta-catenin destruction core complex, APC2-AXIN2-GSK3B variant"/>
</dbReference>
<dbReference type="ComplexPortal" id="CPX-442">
    <property type="entry name" value="Beta-catenin destruction core complex, APC2-AXIN1-GSK3A variant"/>
</dbReference>
<dbReference type="ComplexPortal" id="CPX-443">
    <property type="entry name" value="Beta-catenin destruction core complex, APC2-AXIN2-GSK3A variant"/>
</dbReference>
<dbReference type="ComplexPortal" id="CPX-99">
    <property type="entry name" value="Beta-catenin destruction core complex, APC2-AXIN1-GSK3B variant"/>
</dbReference>
<dbReference type="ELM" id="O95996"/>
<dbReference type="FunCoup" id="O95996">
    <property type="interactions" value="375"/>
</dbReference>
<dbReference type="IntAct" id="O95996">
    <property type="interactions" value="13"/>
</dbReference>
<dbReference type="MINT" id="O95996"/>
<dbReference type="STRING" id="9606.ENSP00000442954"/>
<dbReference type="CarbonylDB" id="O95996"/>
<dbReference type="GlyGen" id="O95996">
    <property type="glycosylation" value="6 sites, 2 O-linked glycans (2 sites)"/>
</dbReference>
<dbReference type="iPTMnet" id="O95996"/>
<dbReference type="PhosphoSitePlus" id="O95996"/>
<dbReference type="BioMuta" id="APC2"/>
<dbReference type="jPOST" id="O95996"/>
<dbReference type="MassIVE" id="O95996"/>
<dbReference type="PaxDb" id="9606-ENSP00000442954"/>
<dbReference type="PeptideAtlas" id="O95996"/>
<dbReference type="ProteomicsDB" id="51171">
    <molecule id="O95996-1"/>
</dbReference>
<dbReference type="ProteomicsDB" id="51172">
    <molecule id="O95996-2"/>
</dbReference>
<dbReference type="ProteomicsDB" id="51173">
    <molecule id="O95996-3"/>
</dbReference>
<dbReference type="Antibodypedia" id="10529">
    <property type="antibodies" value="122 antibodies from 23 providers"/>
</dbReference>
<dbReference type="DNASU" id="10297"/>
<dbReference type="Ensembl" id="ENST00000233607.6">
    <molecule id="O95996-1"/>
    <property type="protein sequence ID" value="ENSP00000233607.2"/>
    <property type="gene ID" value="ENSG00000115266.12"/>
</dbReference>
<dbReference type="Ensembl" id="ENST00000535453.5">
    <molecule id="O95996-1"/>
    <property type="protein sequence ID" value="ENSP00000442954.1"/>
    <property type="gene ID" value="ENSG00000115266.12"/>
</dbReference>
<dbReference type="Ensembl" id="ENST00000590469.6">
    <molecule id="O95996-1"/>
    <property type="protein sequence ID" value="ENSP00000467073.2"/>
    <property type="gene ID" value="ENSG00000115266.12"/>
</dbReference>
<dbReference type="GeneID" id="10297"/>
<dbReference type="KEGG" id="hsa:10297"/>
<dbReference type="MANE-Select" id="ENST00000590469.6">
    <property type="protein sequence ID" value="ENSP00000467073.2"/>
    <property type="RefSeq nucleotide sequence ID" value="NM_005883.3"/>
    <property type="RefSeq protein sequence ID" value="NP_005874.1"/>
</dbReference>
<dbReference type="UCSC" id="uc002lsr.1">
    <molecule id="O95996-1"/>
    <property type="organism name" value="human"/>
</dbReference>
<dbReference type="AGR" id="HGNC:24036"/>
<dbReference type="CTD" id="10297"/>
<dbReference type="DisGeNET" id="10297"/>
<dbReference type="GeneCards" id="APC2"/>
<dbReference type="HGNC" id="HGNC:24036">
    <property type="gene designation" value="APC2"/>
</dbReference>
<dbReference type="HPA" id="ENSG00000115266">
    <property type="expression patterns" value="Tissue enriched (brain)"/>
</dbReference>
<dbReference type="MalaCards" id="APC2"/>
<dbReference type="MIM" id="612034">
    <property type="type" value="gene"/>
</dbReference>
<dbReference type="MIM" id="617169">
    <property type="type" value="phenotype"/>
</dbReference>
<dbReference type="MIM" id="618677">
    <property type="type" value="phenotype"/>
</dbReference>
<dbReference type="neXtProt" id="NX_O95996"/>
<dbReference type="OpenTargets" id="ENSG00000115266"/>
<dbReference type="Orphanet" id="821">
    <property type="disease" value="Sotos syndrome"/>
</dbReference>
<dbReference type="PharmGKB" id="PA134906843"/>
<dbReference type="VEuPathDB" id="HostDB:ENSG00000115266"/>
<dbReference type="eggNOG" id="KOG2122">
    <property type="taxonomic scope" value="Eukaryota"/>
</dbReference>
<dbReference type="GeneTree" id="ENSGT00530000063749"/>
<dbReference type="HOGENOM" id="CLU_001012_0_0_1"/>
<dbReference type="InParanoid" id="O95996"/>
<dbReference type="OMA" id="AGKDCRM"/>
<dbReference type="OrthoDB" id="5918429at2759"/>
<dbReference type="PAN-GO" id="O95996">
    <property type="GO annotations" value="14 GO annotations based on evolutionary models"/>
</dbReference>
<dbReference type="PhylomeDB" id="O95996"/>
<dbReference type="TreeFam" id="TF106496"/>
<dbReference type="PathwayCommons" id="O95996"/>
<dbReference type="SignaLink" id="O95996"/>
<dbReference type="SIGNOR" id="O95996"/>
<dbReference type="BioGRID-ORCS" id="10297">
    <property type="hits" value="21 hits in 1145 CRISPR screens"/>
</dbReference>
<dbReference type="ChiTaRS" id="APC2">
    <property type="organism name" value="human"/>
</dbReference>
<dbReference type="GenomeRNAi" id="10297"/>
<dbReference type="Pharos" id="O95996">
    <property type="development level" value="Tbio"/>
</dbReference>
<dbReference type="PRO" id="PR:O95996"/>
<dbReference type="Proteomes" id="UP000005640">
    <property type="component" value="Chromosome 19"/>
</dbReference>
<dbReference type="RNAct" id="O95996">
    <property type="molecule type" value="protein"/>
</dbReference>
<dbReference type="Bgee" id="ENSG00000115266">
    <property type="expression patterns" value="Expressed in paraflocculus and 163 other cell types or tissues"/>
</dbReference>
<dbReference type="ExpressionAtlas" id="O95996">
    <property type="expression patterns" value="baseline and differential"/>
</dbReference>
<dbReference type="GO" id="GO:0005884">
    <property type="term" value="C:actin filament"/>
    <property type="evidence" value="ECO:0000314"/>
    <property type="project" value="BHF-UCL"/>
</dbReference>
<dbReference type="GO" id="GO:0030877">
    <property type="term" value="C:beta-catenin destruction complex"/>
    <property type="evidence" value="ECO:0000318"/>
    <property type="project" value="GO_Central"/>
</dbReference>
<dbReference type="GO" id="GO:0016342">
    <property type="term" value="C:catenin complex"/>
    <property type="evidence" value="ECO:0000314"/>
    <property type="project" value="MGI"/>
</dbReference>
<dbReference type="GO" id="GO:0005737">
    <property type="term" value="C:cytoplasm"/>
    <property type="evidence" value="ECO:0000314"/>
    <property type="project" value="BHF-UCL"/>
</dbReference>
<dbReference type="GO" id="GO:0005829">
    <property type="term" value="C:cytosol"/>
    <property type="evidence" value="ECO:0000314"/>
    <property type="project" value="HPA"/>
</dbReference>
<dbReference type="GO" id="GO:0005794">
    <property type="term" value="C:Golgi apparatus"/>
    <property type="evidence" value="ECO:0000314"/>
    <property type="project" value="BHF-UCL"/>
</dbReference>
<dbReference type="GO" id="GO:0045171">
    <property type="term" value="C:intercellular bridge"/>
    <property type="evidence" value="ECO:0000314"/>
    <property type="project" value="HPA"/>
</dbReference>
<dbReference type="GO" id="GO:0031258">
    <property type="term" value="C:lamellipodium membrane"/>
    <property type="evidence" value="ECO:0000314"/>
    <property type="project" value="BHF-UCL"/>
</dbReference>
<dbReference type="GO" id="GO:0005874">
    <property type="term" value="C:microtubule"/>
    <property type="evidence" value="ECO:0007669"/>
    <property type="project" value="UniProtKB-KW"/>
</dbReference>
<dbReference type="GO" id="GO:0015630">
    <property type="term" value="C:microtubule cytoskeleton"/>
    <property type="evidence" value="ECO:0000314"/>
    <property type="project" value="BHF-UCL"/>
</dbReference>
<dbReference type="GO" id="GO:0030496">
    <property type="term" value="C:midbody"/>
    <property type="evidence" value="ECO:0000314"/>
    <property type="project" value="HPA"/>
</dbReference>
<dbReference type="GO" id="GO:0048471">
    <property type="term" value="C:perinuclear region of cytoplasm"/>
    <property type="evidence" value="ECO:0000314"/>
    <property type="project" value="BHF-UCL"/>
</dbReference>
<dbReference type="GO" id="GO:0008013">
    <property type="term" value="F:beta-catenin binding"/>
    <property type="evidence" value="ECO:0000314"/>
    <property type="project" value="MGI"/>
</dbReference>
<dbReference type="GO" id="GO:0045295">
    <property type="term" value="F:gamma-catenin binding"/>
    <property type="evidence" value="ECO:0000318"/>
    <property type="project" value="GO_Central"/>
</dbReference>
<dbReference type="GO" id="GO:0008017">
    <property type="term" value="F:microtubule binding"/>
    <property type="evidence" value="ECO:0000318"/>
    <property type="project" value="GO_Central"/>
</dbReference>
<dbReference type="GO" id="GO:0090630">
    <property type="term" value="P:activation of GTPase activity"/>
    <property type="evidence" value="ECO:0000315"/>
    <property type="project" value="UniProtKB"/>
</dbReference>
<dbReference type="GO" id="GO:0001708">
    <property type="term" value="P:cell fate specification"/>
    <property type="evidence" value="ECO:0000318"/>
    <property type="project" value="GO_Central"/>
</dbReference>
<dbReference type="GO" id="GO:0016477">
    <property type="term" value="P:cell migration"/>
    <property type="evidence" value="ECO:0000318"/>
    <property type="project" value="GO_Central"/>
</dbReference>
<dbReference type="GO" id="GO:0000226">
    <property type="term" value="P:microtubule cytoskeleton organization"/>
    <property type="evidence" value="ECO:0000315"/>
    <property type="project" value="UniProtKB"/>
</dbReference>
<dbReference type="GO" id="GO:0090090">
    <property type="term" value="P:negative regulation of canonical Wnt signaling pathway"/>
    <property type="evidence" value="ECO:0000314"/>
    <property type="project" value="BHF-UCL"/>
</dbReference>
<dbReference type="GO" id="GO:0007026">
    <property type="term" value="P:negative regulation of microtubule depolymerization"/>
    <property type="evidence" value="ECO:0000318"/>
    <property type="project" value="GO_Central"/>
</dbReference>
<dbReference type="GO" id="GO:0007399">
    <property type="term" value="P:nervous system development"/>
    <property type="evidence" value="ECO:0000318"/>
    <property type="project" value="GO_Central"/>
</dbReference>
<dbReference type="GO" id="GO:0007389">
    <property type="term" value="P:pattern specification process"/>
    <property type="evidence" value="ECO:0000318"/>
    <property type="project" value="GO_Central"/>
</dbReference>
<dbReference type="GO" id="GO:0043161">
    <property type="term" value="P:proteasome-mediated ubiquitin-dependent protein catabolic process"/>
    <property type="evidence" value="ECO:0000303"/>
    <property type="project" value="ComplexPortal"/>
</dbReference>
<dbReference type="GO" id="GO:0016055">
    <property type="term" value="P:Wnt signaling pathway"/>
    <property type="evidence" value="ECO:0007669"/>
    <property type="project" value="UniProtKB-KW"/>
</dbReference>
<dbReference type="FunFam" id="1.20.5.10:FF:000003">
    <property type="entry name" value="Adenomatous polyposis coli protein 2"/>
    <property type="match status" value="1"/>
</dbReference>
<dbReference type="FunFam" id="1.10.287.450:FF:000002">
    <property type="entry name" value="adenomatous polyposis coli protein 2"/>
    <property type="match status" value="1"/>
</dbReference>
<dbReference type="FunFam" id="1.25.10.10:FF:000035">
    <property type="entry name" value="adenomatous polyposis coli protein 2"/>
    <property type="match status" value="1"/>
</dbReference>
<dbReference type="Gene3D" id="1.20.5.10">
    <property type="match status" value="1"/>
</dbReference>
<dbReference type="Gene3D" id="1.10.287.450">
    <property type="entry name" value="Helix hairpin bin"/>
    <property type="match status" value="1"/>
</dbReference>
<dbReference type="Gene3D" id="1.25.10.10">
    <property type="entry name" value="Leucine-rich Repeat Variant"/>
    <property type="match status" value="1"/>
</dbReference>
<dbReference type="InterPro" id="IPR009234">
    <property type="entry name" value="APC_basic_dom"/>
</dbReference>
<dbReference type="InterPro" id="IPR026831">
    <property type="entry name" value="APC_dom"/>
</dbReference>
<dbReference type="InterPro" id="IPR026818">
    <property type="entry name" value="Apc_fam"/>
</dbReference>
<dbReference type="InterPro" id="IPR032038">
    <property type="entry name" value="APC_N"/>
</dbReference>
<dbReference type="InterPro" id="IPR036149">
    <property type="entry name" value="APC_N_sf"/>
</dbReference>
<dbReference type="InterPro" id="IPR041257">
    <property type="entry name" value="APC_rep"/>
</dbReference>
<dbReference type="InterPro" id="IPR009223">
    <property type="entry name" value="APC_rpt"/>
</dbReference>
<dbReference type="InterPro" id="IPR011989">
    <property type="entry name" value="ARM-like"/>
</dbReference>
<dbReference type="InterPro" id="IPR016024">
    <property type="entry name" value="ARM-type_fold"/>
</dbReference>
<dbReference type="InterPro" id="IPR000225">
    <property type="entry name" value="Armadillo"/>
</dbReference>
<dbReference type="InterPro" id="IPR009224">
    <property type="entry name" value="SAMP"/>
</dbReference>
<dbReference type="PANTHER" id="PTHR12607:SF3">
    <property type="entry name" value="ADENOMATOUS POLYPOSIS COLI PROTEIN 2"/>
    <property type="match status" value="1"/>
</dbReference>
<dbReference type="PANTHER" id="PTHR12607">
    <property type="entry name" value="ADENOMATOUS POLYPOSIS COLI PROTEIN FAMILY"/>
    <property type="match status" value="1"/>
</dbReference>
<dbReference type="Pfam" id="PF05956">
    <property type="entry name" value="APC_basic"/>
    <property type="match status" value="1"/>
</dbReference>
<dbReference type="Pfam" id="PF16689">
    <property type="entry name" value="APC_N_CC"/>
    <property type="match status" value="1"/>
</dbReference>
<dbReference type="Pfam" id="PF05923">
    <property type="entry name" value="APC_r"/>
    <property type="match status" value="4"/>
</dbReference>
<dbReference type="Pfam" id="PF18797">
    <property type="entry name" value="APC_rep"/>
    <property type="match status" value="1"/>
</dbReference>
<dbReference type="Pfam" id="PF00514">
    <property type="entry name" value="Arm"/>
    <property type="match status" value="1"/>
</dbReference>
<dbReference type="Pfam" id="PF16629">
    <property type="entry name" value="Arm_APC_u3"/>
    <property type="match status" value="1"/>
</dbReference>
<dbReference type="Pfam" id="PF05924">
    <property type="entry name" value="SAMP"/>
    <property type="match status" value="2"/>
</dbReference>
<dbReference type="Pfam" id="PF11414">
    <property type="entry name" value="Suppressor_APC"/>
    <property type="match status" value="1"/>
</dbReference>
<dbReference type="SMART" id="SM00185">
    <property type="entry name" value="ARM"/>
    <property type="match status" value="6"/>
</dbReference>
<dbReference type="SUPFAM" id="SSF48371">
    <property type="entry name" value="ARM repeat"/>
    <property type="match status" value="1"/>
</dbReference>
<dbReference type="SUPFAM" id="SSF58050">
    <property type="entry name" value="N-terminal coiled coil domain from apc"/>
    <property type="match status" value="1"/>
</dbReference>
<dbReference type="SUPFAM" id="SSF82931">
    <property type="entry name" value="Tumor suppressor gene product Apc"/>
    <property type="match status" value="1"/>
</dbReference>
<protein>
    <recommendedName>
        <fullName evidence="15">Adenomatous polyposis coli protein 2</fullName>
    </recommendedName>
    <alternativeName>
        <fullName>Adenomatous polyposis coli protein-like</fullName>
        <shortName>APC-like</shortName>
    </alternativeName>
</protein>
<sequence length="2303" mass="243949">MASSVAPYEQLVRQVEALKAENSHLRQELRDNSSHLSKLETETSGMKEVLKHLQGKLEQEARVLVSSGQTEVLEQLKALQMDITSLYNLKFQPPTLGPEPAARTPEGSPVHGSGPSKDSFGELSRATIRLLEELDRERCFLLNEIEKEEKEKLWYYSQLQGLSKRLDELPHVETQFSMQMDLIRQQLEFEAQHIRSLMEERFGTSDEMVQRAQIRASRLEQIDKELLEAQDRVQQTEPQALLAVKSVPVDEDPETEVPTHPEDGTPQPGNSKVEVVFWLLSMLATRDQEDTARTLLAMSSSPESCVAMRRSGCLPLLLQILHGTEAAAGGRAGAPGAPGAKDARMRANAALHNIVFSQPDQGLARKEMRVLHVLEQIRAYCETCWDWLQARDGGPEGGGAGSAPIPIEPQICQATCAVMKLSFDEEYRRAMNELGGLQAVAELLQVDYEMHKMTRDPLNLALRRYAGMTLTNLTFGDVANKATLCARRGCMEAIVAQLASDSEELHQVVSSILRNLSWRADINSKKVLREAGSVTALVQCVLRATKESTLKSVLSALWNLSAHSTENKAAICQVDGALGFLVSTLTYKCQSNSLAIIESGGGILRNVSSLVATREDYRQVLRDHNCLQTLLQHLTSHSLTIVSNACGTLWNLSARSARDQELLWDLGAVGMLRNLVHSKHKMIAMGSAAALRNLLAHRPAKHQAAATAVSPGSCVPSLYVRKQRALEAELDARHLAQALEHLEKQGPPAAEAATKKPLPPLRHLDGLAQDYASDSGCFDDDDAPSSLAAAAATGEPASPAALSLFLGSPFLQGQALARTPPTRRGGKEAEKDTSGEAAVAAKAKAKLALAVARIDQLVEDISALHTSSDDSFSLSSGDPGQEAPREGRAQSCSPCRGPEGGRREAGSRAHPLLRLKAAHASLSNDSLNSGSASDGYCPREHMLPCPLAALASRREDPRCGQPRPSRLDLDLPGCQAEPPAREATSADARVRTIKLSPTYQHVPLLEGASRAGAEPLAGPGISPGARKQAWLPADHLSKVPEKLAAAPLSVASKALQKLAAQEGPLSLSRCSSLSSLSSAGRPGPSEGGDLDDSDSSLEGLEEAGPSEAELDSTWRAPGATSLPVAIPAPRRNRGRGLGVEDATPSSSSENYVQETPLVLSRCSSVSSLGSFESPSIASSIPSEPCSGQGSGTISPSELPDSPGQTMPPSRSKTPPLAPAPQGPPEATQFSLQWESYVKRFLDIADCRERCRLPSELDAGSVRFTVEKPDENFSCASSLSALALHEHYVQQDVELRLLPSACPERGGGAGGAGLHFAGHRRREEGPAPTGSRPRGAADQELELLRECLGAAVPARLRKVASALVPGRRALPVPVYMLVPAPAPAQEDDSCTDSAEGTPVNFSSAASLSDETLQGPPRDQPGGPAGRQRPTGRPTSARQAMGHRHKAGGAGRSAEQSRGAGKNRAGLELPLGRPPSAPADKDGSKPGRTRGDGALQSLCLTTPTEEAVYCFYGNDSDEEPPAAAPTPTHRRTSAIPRAFTRERPQGRKEAPAPSKAAPAAPPPARTQPSLIADETPPCYSLSSSASSLSEPEPSEPPAVHPRGREPAVTKDPGPGGGRDSSPSPRAAEELLQRCISSALPRRRPPVSGLRRRKPRATRLDERPAEGSRERGEEAAGSDRASDLDSVEWRAIQEGANSIVTWLHQAAAATREASSESDSILSFVSGLSVGSTLQPPKHRKGRQAEGEMGSARRPEKRGAASVKTSGSPRSPAGPEKPRGTQKTTPGVPAVLRGRTVIYVPSPAPRAQPKGTPGPRATPRKVAPPCLAQPAAPAKVPSPGQQRSRSLHRPAKTSELATLSQPPRSATPPARLAKTPSSSSSQTSPASQPLPRKRPPVTQAAGALPGPGASPVPKTPARTLLAKQHKTQRSPVRIPFMQRPARRGPPPLARAVPEPGPRGRAGTEAGPGARGGRLGLVRVASALSSGSESSDRSGFRRQLTFIKESPGLRRRRSELSSAESAASAPQGASPRRGRPALPAVFLCSSRCEELRAAPRQGPAPARQRPPAARPSPGERPARRTTSESPSRLPVRAPAARPETVKRYASLPHISVARRPDGAVPAAPASADAARRSSDGEPRPLPRVAAPGTTWRRIRDEDVPHILRSTLPATALPLRGSTPEDAPAGPPPRKTSDAVVQTEEVAAPKTNSSTSPSLETREPPGAPAGGQLSLLGSDVDGPSLAKAPISAPFVHEGLGVAVGGFPASRHGSPSRSARVPPFNYVPSPMVVAATTDSAAEKAPATASATLLE</sequence>
<reference key="1">
    <citation type="journal article" date="1998" name="Cancer Res.">
        <title>Identification of a brain-specific APC homologue, APCL, and its interaction with beta-catenin.</title>
        <authorList>
            <person name="Nakagawa H."/>
            <person name="Murata Y."/>
            <person name="Koyama K."/>
            <person name="Fujiyama A."/>
            <person name="Miyoshi Y."/>
            <person name="Monden M."/>
            <person name="Akiyama T."/>
            <person name="Nakamura Y."/>
        </authorList>
    </citation>
    <scope>NUCLEOTIDE SEQUENCE [MRNA] (ISOFORM 1)</scope>
    <scope>FUNCTION</scope>
    <scope>INTERACTION WITH CTNNB1</scope>
    <scope>TISSUE SPECIFICITY</scope>
    <source>
        <tissue>Brain</tissue>
    </source>
</reference>
<reference key="2">
    <citation type="journal article" date="1999" name="Jpn. J. Cancer Res.">
        <title>Analysis of APCL, a brain-specific adenomatous polyposis coli homologue, for mutations and expression in brain tumors.</title>
        <authorList>
            <person name="Nakagawa H."/>
            <person name="Koyama K."/>
            <person name="Monden M."/>
            <person name="Nakamura Y."/>
        </authorList>
    </citation>
    <scope>NUCLEOTIDE SEQUENCE [GENOMIC DNA] (ISOFORM 1)</scope>
</reference>
<reference key="3">
    <citation type="submission" date="2005-09" db="EMBL/GenBank/DDBJ databases">
        <authorList>
            <person name="Mural R.J."/>
            <person name="Istrail S."/>
            <person name="Sutton G.G."/>
            <person name="Florea L."/>
            <person name="Halpern A.L."/>
            <person name="Mobarry C.M."/>
            <person name="Lippert R."/>
            <person name="Walenz B."/>
            <person name="Shatkay H."/>
            <person name="Dew I."/>
            <person name="Miller J.R."/>
            <person name="Flanigan M.J."/>
            <person name="Edwards N.J."/>
            <person name="Bolanos R."/>
            <person name="Fasulo D."/>
            <person name="Halldorsson B.V."/>
            <person name="Hannenhalli S."/>
            <person name="Turner R."/>
            <person name="Yooseph S."/>
            <person name="Lu F."/>
            <person name="Nusskern D.R."/>
            <person name="Shue B.C."/>
            <person name="Zheng X.H."/>
            <person name="Zhong F."/>
            <person name="Delcher A.L."/>
            <person name="Huson D.H."/>
            <person name="Kravitz S.A."/>
            <person name="Mouchard L."/>
            <person name="Reinert K."/>
            <person name="Remington K.A."/>
            <person name="Clark A.G."/>
            <person name="Waterman M.S."/>
            <person name="Eichler E.E."/>
            <person name="Adams M.D."/>
            <person name="Hunkapiller M.W."/>
            <person name="Myers E.W."/>
            <person name="Venter J.C."/>
        </authorList>
    </citation>
    <scope>NUCLEOTIDE SEQUENCE [LARGE SCALE GENOMIC DNA]</scope>
</reference>
<reference key="4">
    <citation type="submission" date="1998-11" db="EMBL/GenBank/DDBJ databases">
        <title>APC2 alternatively spliced cDNA sequence.</title>
        <authorList>
            <person name="Carr I.M."/>
            <person name="Markham A.F."/>
            <person name="Colleta P.L."/>
            <person name="Wai L."/>
            <person name="Askham J."/>
            <person name="Morrison E."/>
            <person name="Meredith D.M."/>
        </authorList>
    </citation>
    <scope>NUCLEOTIDE SEQUENCE [MRNA] OF 1-1521 (ISOFORM 2)</scope>
    <scope>NUCLEOTIDE SEQUENCE [GENOMIC DNA] OF 34-86 AND 476-555 (ISOFORM 2)</scope>
</reference>
<reference key="5">
    <citation type="journal article" date="1999" name="Curr. Biol.">
        <title>Identification of APC2, a homologue of the adenomatous polyposis coli tumour suppressor.</title>
        <authorList>
            <person name="van Es J.H."/>
            <person name="Kirkpatrick C."/>
            <person name="van de Wetering M."/>
            <person name="Molenaar M."/>
            <person name="Miles A."/>
            <person name="Kuipers J."/>
            <person name="Destree O."/>
            <person name="Peifer M."/>
            <person name="Clevers H."/>
        </authorList>
    </citation>
    <scope>NUCLEOTIDE SEQUENCE [MRNA] OF 1-731 (ISOFORM 3)</scope>
    <scope>NUCLEOTIDE SEQUENCE [GENOMIC DNA] OF 618-2303 (ISOFORM 3)</scope>
    <scope>FUNCTION</scope>
    <scope>INTERACTION WITH AXIN2</scope>
    <scope>TISSUE SPECIFICITY</scope>
    <scope>DEVELOPMENTAL STAGE</scope>
    <source>
        <tissue>Kidney</tissue>
    </source>
</reference>
<reference key="6">
    <citation type="journal article" date="2004" name="Genome Res.">
        <title>The status, quality, and expansion of the NIH full-length cDNA project: the Mammalian Gene Collection (MGC).</title>
        <authorList>
            <consortium name="The MGC Project Team"/>
        </authorList>
    </citation>
    <scope>NUCLEOTIDE SEQUENCE [LARGE SCALE MRNA] OF 1-702 (ISOFORM 1)</scope>
    <source>
        <tissue>Brain</tissue>
    </source>
</reference>
<reference key="7">
    <citation type="journal article" date="2000" name="Cancer Res.">
        <title>APCL, a central nervous system-specific homologue of adenomatous polyposis coli tumor suppressor, binds to p53-binding protein 2 and translocates it to the perinucleus.</title>
        <authorList>
            <person name="Nakagawa H."/>
            <person name="Koyama K."/>
            <person name="Murata Y."/>
            <person name="Morito M."/>
            <person name="Akiyama T."/>
            <person name="Nakamura Y."/>
        </authorList>
    </citation>
    <scope>INTERACTION WITH TP53BP2</scope>
    <scope>SUBCELLULAR LOCATION</scope>
</reference>
<reference key="8">
    <citation type="journal article" date="2000" name="Oncogene">
        <title>EB3, a novel member of the EB1 family preferentially expressed in the central nervous system, binds to a CNS-specific APC homologue.</title>
        <authorList>
            <person name="Nakagawa H."/>
            <person name="Koyama K."/>
            <person name="Murata Y."/>
            <person name="Morito M."/>
            <person name="Akiyama T."/>
            <person name="Nakamura Y."/>
        </authorList>
    </citation>
    <scope>INTERACTION WITH MAPRE1 AND MAPRE3</scope>
    <scope>SUBCELLULAR LOCATION</scope>
    <source>
        <tissue>Fetal brain</tissue>
    </source>
</reference>
<reference key="9">
    <citation type="journal article" date="2001" name="Cancer Res.">
        <title>Human APC2 localization and allelic imbalance.</title>
        <authorList>
            <person name="Jarrett C.R."/>
            <person name="Blancato J."/>
            <person name="Cao T."/>
            <person name="Bressette D.S."/>
            <person name="Cepeda M."/>
            <person name="Young P.E."/>
            <person name="King C.R."/>
            <person name="Byers S.W."/>
        </authorList>
    </citation>
    <scope>FUNCTION</scope>
    <scope>SUBCELLULAR LOCATION</scope>
    <scope>INTERACTION WITH APC</scope>
    <scope>TISSUE SPECIFICITY</scope>
</reference>
<reference key="10">
    <citation type="journal article" date="2015" name="Cell Rep.">
        <title>Loss-of-function mutation in APC2 causes Sotos syndrome features.</title>
        <authorList>
            <person name="Almuriekhi M."/>
            <person name="Shintani T."/>
            <person name="Fahiminiya S."/>
            <person name="Fujikawa A."/>
            <person name="Kuboyama K."/>
            <person name="Takeuchi Y."/>
            <person name="Nawaz Z."/>
            <person name="Nadaf J."/>
            <person name="Kamel H."/>
            <person name="Kitam A.K."/>
            <person name="Samiha Z."/>
            <person name="Mahmoud L."/>
            <person name="Ben-Omran T."/>
            <person name="Majewski J."/>
            <person name="Noda M."/>
        </authorList>
    </citation>
    <scope>INVOLVEMENT IN MRT74</scope>
    <scope>FUNCTION</scope>
    <scope>SUBCELLULAR LOCATION</scope>
    <scope>REGION</scope>
</reference>
<reference key="11">
    <citation type="journal article" date="2006" name="Science">
        <title>The consensus coding sequences of human breast and colorectal cancers.</title>
        <authorList>
            <person name="Sjoeblom T."/>
            <person name="Jones S."/>
            <person name="Wood L.D."/>
            <person name="Parsons D.W."/>
            <person name="Lin J."/>
            <person name="Barber T.D."/>
            <person name="Mandelker D."/>
            <person name="Leary R.J."/>
            <person name="Ptak J."/>
            <person name="Silliman N."/>
            <person name="Szabo S."/>
            <person name="Buckhaults P."/>
            <person name="Farrell C."/>
            <person name="Meeh P."/>
            <person name="Markowitz S.D."/>
            <person name="Willis J."/>
            <person name="Dawson D."/>
            <person name="Willson J.K.V."/>
            <person name="Gazdar A.F."/>
            <person name="Hartigan J."/>
            <person name="Wu L."/>
            <person name="Liu C."/>
            <person name="Parmigiani G."/>
            <person name="Park B.H."/>
            <person name="Bachman K.E."/>
            <person name="Papadopoulos N."/>
            <person name="Vogelstein B."/>
            <person name="Kinzler K.W."/>
            <person name="Velculescu V.E."/>
        </authorList>
    </citation>
    <scope>VARIANTS [LARGE SCALE ANALYSIS] SER-562 AND SER-2003</scope>
</reference>
<reference evidence="15" key="12">
    <citation type="journal article" date="2018" name="Clin. Genet.">
        <title>A novel nonsense variant in REEP6 is involved in a sporadic rod-cone dystrophy case.</title>
        <authorList>
            <person name="Mejecase C."/>
            <person name="Mohand-Said S."/>
            <person name="El Shamieh S."/>
            <person name="Antonio A."/>
            <person name="Condroyer C."/>
            <person name="Blanchard S."/>
            <person name="Letexier M."/>
            <person name="Saraiva J.P."/>
            <person name="Sahel J.A."/>
            <person name="Audo I."/>
            <person name="Zeitz C."/>
        </authorList>
    </citation>
    <scope>VARIANT ASN-1921</scope>
</reference>
<reference key="13">
    <citation type="journal article" date="2019" name="Am. J. Hum. Genet.">
        <title>Bi-allelic Loss of Human APC2, Encoding Adenomatous Polyposis Coli Protein 2, Leads to Lissencephaly, Subcortical Heterotopia, and Global Developmental Delay.</title>
        <authorList>
            <person name="Lee S."/>
            <person name="Chen D.Y."/>
            <person name="Zaki M.S."/>
            <person name="Maroofian R."/>
            <person name="Houlden H."/>
            <person name="Di Donato N."/>
            <person name="Abdin D."/>
            <person name="Morsy H."/>
            <person name="Mirzaa G.M."/>
            <person name="Dobyns W.B."/>
            <person name="McEvoy-Venneri J."/>
            <person name="Stanley V."/>
            <person name="James K.N."/>
            <person name="Mancini G.M.S."/>
            <person name="Schot R."/>
            <person name="Kalayci T."/>
            <person name="Altunoglu U."/>
            <person name="Karimiani E.G."/>
            <person name="Brick L."/>
            <person name="Kozenko M."/>
            <person name="Jamshidi Y."/>
            <person name="Manzini M.C."/>
            <person name="Beiraghi Toosi M."/>
            <person name="Gleeson J.G."/>
        </authorList>
    </citation>
    <scope>INVOLVEMENT IN CDCBM10</scope>
    <scope>VARIANTS CDCBM10 246-SER--GLU-2303 DEL; 361-GLN--GLU-2303 DEL AND 628-GLN--GLU-2303 DEL</scope>
</reference>
<name>APCL_HUMAN</name>
<organism>
    <name type="scientific">Homo sapiens</name>
    <name type="common">Human</name>
    <dbReference type="NCBI Taxonomy" id="9606"/>
    <lineage>
        <taxon>Eukaryota</taxon>
        <taxon>Metazoa</taxon>
        <taxon>Chordata</taxon>
        <taxon>Craniata</taxon>
        <taxon>Vertebrata</taxon>
        <taxon>Euteleostomi</taxon>
        <taxon>Mammalia</taxon>
        <taxon>Eutheria</taxon>
        <taxon>Euarchontoglires</taxon>
        <taxon>Primates</taxon>
        <taxon>Haplorrhini</taxon>
        <taxon>Catarrhini</taxon>
        <taxon>Hominidae</taxon>
        <taxon>Homo</taxon>
    </lineage>
</organism>
<gene>
    <name evidence="16" type="primary">APC2</name>
    <name type="synonym">APCL</name>
</gene>
<comment type="function">
    <text evidence="4 7 9 12">Stabilizes microtubules and may regulate actin fiber dynamics through the activation of Rho family GTPases (PubMed:25753423). May also function in Wnt signaling by promoting the rapid degradation of CTNNB1 (PubMed:10021369, PubMed:11691822, PubMed:9823329).</text>
</comment>
<comment type="subunit">
    <text evidence="1 4 5 6 7 12">Interacts with PSRC1 (By similarity). Interacts with APC (PubMed:11691822). Interacts with CTNNB1 (PubMed:9823329). Interacts with MAPRE1 and MAPRE3 (PubMed:10644998). Interacts with TP53BP (PubMed:10646860). Interacts possibly with AXIN2 (PubMed:10021369).</text>
</comment>
<comment type="interaction">
    <interactant intactId="EBI-1053045">
        <id>O95996</id>
    </interactant>
    <interactant intactId="EBI-1004115">
        <id>Q15691</id>
        <label>MAPRE1</label>
    </interactant>
    <organismsDiffer>false</organismsDiffer>
    <experiments>3</experiments>
</comment>
<comment type="interaction">
    <interactant intactId="EBI-1053045">
        <id>O95996</id>
    </interactant>
    <interactant intactId="EBI-726739">
        <id>Q9UPY8</id>
        <label>MAPRE3</label>
    </interactant>
    <organismsDiffer>false</organismsDiffer>
    <experiments>7</experiments>
</comment>
<comment type="interaction">
    <interactant intactId="EBI-1053045">
        <id>O95996</id>
    </interactant>
    <interactant intactId="EBI-77642">
        <id>Q13625</id>
        <label>TP53BP2</label>
    </interactant>
    <organismsDiffer>false</organismsDiffer>
    <experiments>4</experiments>
</comment>
<comment type="subcellular location">
    <subcellularLocation>
        <location evidence="5 7 9">Cytoplasm</location>
        <location evidence="5 7 9">Cytoskeleton</location>
    </subcellularLocation>
    <subcellularLocation>
        <location evidence="7">Golgi apparatus</location>
    </subcellularLocation>
    <subcellularLocation>
        <location evidence="7">Cytoplasm</location>
    </subcellularLocation>
    <subcellularLocation>
        <location evidence="6">Cytoplasm</location>
        <location evidence="6">Perinuclear region</location>
    </subcellularLocation>
    <text evidence="5 7 9">Associated with actin filaments (PubMed:11691822, PubMed:25753423). Associated with microtubule network (PubMed:10644998, PubMed:11691822, PubMed:25753423).</text>
</comment>
<comment type="alternative products">
    <event type="alternative splicing"/>
    <isoform>
        <id>O95996-1</id>
        <name>1</name>
        <sequence type="displayed"/>
    </isoform>
    <isoform>
        <id>O95996-2</id>
        <name>2</name>
        <sequence type="described" ref="VSP_030106"/>
    </isoform>
    <isoform>
        <id>O95996-3</id>
        <name>3</name>
        <sequence type="described" ref="VSP_030107"/>
    </isoform>
</comment>
<comment type="tissue specificity">
    <text evidence="4 7 12">Widely expressed (at protein level). Specifically expressed in the CNS.</text>
</comment>
<comment type="developmental stage">
    <text evidence="4">Expressed in fetal brain.</text>
</comment>
<comment type="disease" evidence="9">
    <disease id="DI-04855">
        <name>Intellectual developmental disorder, autosomal recessive 74</name>
        <acronym>MRT74</acronym>
        <description>A disorder characterized by intellectual impairment, macrocephaly, and dysmorphic features. Epilepsy with eyelid myoclonus has also been reported.</description>
        <dbReference type="MIM" id="617169"/>
    </disease>
    <text>The disease is caused by variants affecting the gene represented in this entry.</text>
</comment>
<comment type="disease" evidence="11">
    <disease id="DI-05688">
        <name>Cortical dysplasia, complex, with other brain malformations 10</name>
        <acronym>CDCBM10</acronym>
        <description>An autosomal recessive disorder of aberrant neuronal migration during brain development. CDCBM10 is clinically characterized by onset in infancy of global developmental delay, impaired intellectual development, seizures, inability to ambulate, and absent language. Brain imaging shows lissencephaly, cortical dysplasia, subcortical heterotopia, and paucity of white matter.</description>
        <dbReference type="MIM" id="618677"/>
    </disease>
    <text>The disease is caused by variants affecting the gene represented in this entry.</text>
</comment>
<comment type="similarity">
    <text evidence="15">Belongs to the adenomatous polyposis coli (APC) family.</text>
</comment>
<comment type="sequence caution" evidence="15">
    <conflict type="frameshift">
        <sequence resource="EMBL-CDS" id="AAD28183"/>
    </conflict>
</comment>
<comment type="sequence caution" evidence="15">
    <conflict type="miscellaneous discrepancy">
        <sequence resource="EMBL-CDS" id="AAF01784"/>
    </conflict>
    <text>Contaminating sequence.</text>
</comment>
<comment type="sequence caution" evidence="15">
    <conflict type="erroneous initiation">
        <sequence resource="EMBL-CDS" id="CAA10317"/>
    </conflict>
    <text>Truncated N-terminus.</text>
</comment>
<comment type="sequence caution" evidence="15">
    <conflict type="miscellaneous discrepancy">
        <sequence resource="EMBL-CDS" id="CAB61207"/>
    </conflict>
    <text>Contaminating sequence.</text>
</comment>
<accession>O95996</accession>
<accession>Q05BW4</accession>
<accession>Q9UBZ1</accession>
<accession>Q9UEM8</accession>
<accession>Q9UQJ8</accession>
<accession>Q9UQJ9</accession>
<accession>Q9Y632</accession>